<name>ACS2_CANGA</name>
<protein>
    <recommendedName>
        <fullName>Acetyl-coenzyme A synthetase 2</fullName>
        <ecNumber>6.2.1.1</ecNumber>
    </recommendedName>
    <alternativeName>
        <fullName>Acetate--CoA ligase 2</fullName>
    </alternativeName>
    <alternativeName>
        <fullName>Acyl-activating enzyme 2</fullName>
    </alternativeName>
</protein>
<keyword id="KW-0067">ATP-binding</keyword>
<keyword id="KW-0436">Ligase</keyword>
<keyword id="KW-0547">Nucleotide-binding</keyword>
<keyword id="KW-1185">Reference proteome</keyword>
<proteinExistence type="inferred from homology"/>
<evidence type="ECO:0000250" key="1"/>
<evidence type="ECO:0000305" key="2"/>
<reference key="1">
    <citation type="journal article" date="2004" name="Nature">
        <title>Genome evolution in yeasts.</title>
        <authorList>
            <person name="Dujon B."/>
            <person name="Sherman D."/>
            <person name="Fischer G."/>
            <person name="Durrens P."/>
            <person name="Casaregola S."/>
            <person name="Lafontaine I."/>
            <person name="de Montigny J."/>
            <person name="Marck C."/>
            <person name="Neuveglise C."/>
            <person name="Talla E."/>
            <person name="Goffard N."/>
            <person name="Frangeul L."/>
            <person name="Aigle M."/>
            <person name="Anthouard V."/>
            <person name="Babour A."/>
            <person name="Barbe V."/>
            <person name="Barnay S."/>
            <person name="Blanchin S."/>
            <person name="Beckerich J.-M."/>
            <person name="Beyne E."/>
            <person name="Bleykasten C."/>
            <person name="Boisrame A."/>
            <person name="Boyer J."/>
            <person name="Cattolico L."/>
            <person name="Confanioleri F."/>
            <person name="de Daruvar A."/>
            <person name="Despons L."/>
            <person name="Fabre E."/>
            <person name="Fairhead C."/>
            <person name="Ferry-Dumazet H."/>
            <person name="Groppi A."/>
            <person name="Hantraye F."/>
            <person name="Hennequin C."/>
            <person name="Jauniaux N."/>
            <person name="Joyet P."/>
            <person name="Kachouri R."/>
            <person name="Kerrest A."/>
            <person name="Koszul R."/>
            <person name="Lemaire M."/>
            <person name="Lesur I."/>
            <person name="Ma L."/>
            <person name="Muller H."/>
            <person name="Nicaud J.-M."/>
            <person name="Nikolski M."/>
            <person name="Oztas S."/>
            <person name="Ozier-Kalogeropoulos O."/>
            <person name="Pellenz S."/>
            <person name="Potier S."/>
            <person name="Richard G.-F."/>
            <person name="Straub M.-L."/>
            <person name="Suleau A."/>
            <person name="Swennen D."/>
            <person name="Tekaia F."/>
            <person name="Wesolowski-Louvel M."/>
            <person name="Westhof E."/>
            <person name="Wirth B."/>
            <person name="Zeniou-Meyer M."/>
            <person name="Zivanovic Y."/>
            <person name="Bolotin-Fukuhara M."/>
            <person name="Thierry A."/>
            <person name="Bouchier C."/>
            <person name="Caudron B."/>
            <person name="Scarpelli C."/>
            <person name="Gaillardin C."/>
            <person name="Weissenbach J."/>
            <person name="Wincker P."/>
            <person name="Souciet J.-L."/>
        </authorList>
    </citation>
    <scope>NUCLEOTIDE SEQUENCE [LARGE SCALE GENOMIC DNA]</scope>
    <source>
        <strain>ATCC 2001 / BCRC 20586 / JCM 3761 / NBRC 0622 / NRRL Y-65 / CBS 138</strain>
    </source>
</reference>
<dbReference type="EC" id="6.2.1.1"/>
<dbReference type="EMBL" id="CR380948">
    <property type="protein sequence ID" value="CAG57989.1"/>
    <property type="molecule type" value="Genomic_DNA"/>
</dbReference>
<dbReference type="RefSeq" id="XP_445089.1">
    <property type="nucleotide sequence ID" value="XM_445089.1"/>
</dbReference>
<dbReference type="SMR" id="Q6FXI2"/>
<dbReference type="FunCoup" id="Q6FXI2">
    <property type="interactions" value="807"/>
</dbReference>
<dbReference type="STRING" id="284593.Q6FXI2"/>
<dbReference type="EnsemblFungi" id="CAGL0B02717g-T">
    <property type="protein sequence ID" value="CAGL0B02717g-T-p1"/>
    <property type="gene ID" value="CAGL0B02717g"/>
</dbReference>
<dbReference type="KEGG" id="cgr:2886546"/>
<dbReference type="CGD" id="CAL0127800">
    <property type="gene designation" value="CAGL0B02717g"/>
</dbReference>
<dbReference type="VEuPathDB" id="FungiDB:CAGL0B02717g"/>
<dbReference type="eggNOG" id="KOG1175">
    <property type="taxonomic scope" value="Eukaryota"/>
</dbReference>
<dbReference type="HOGENOM" id="CLU_000022_3_6_1"/>
<dbReference type="InParanoid" id="Q6FXI2"/>
<dbReference type="OMA" id="TVHTKKI"/>
<dbReference type="Proteomes" id="UP000002428">
    <property type="component" value="Chromosome B"/>
</dbReference>
<dbReference type="GO" id="GO:0005829">
    <property type="term" value="C:cytosol"/>
    <property type="evidence" value="ECO:0007669"/>
    <property type="project" value="EnsemblFungi"/>
</dbReference>
<dbReference type="GO" id="GO:0005730">
    <property type="term" value="C:nucleolus"/>
    <property type="evidence" value="ECO:0007669"/>
    <property type="project" value="EnsemblFungi"/>
</dbReference>
<dbReference type="GO" id="GO:0003987">
    <property type="term" value="F:acetate-CoA ligase activity"/>
    <property type="evidence" value="ECO:0007669"/>
    <property type="project" value="UniProtKB-EC"/>
</dbReference>
<dbReference type="GO" id="GO:0016880">
    <property type="term" value="F:acid-ammonia (or amide) ligase activity"/>
    <property type="evidence" value="ECO:0007669"/>
    <property type="project" value="EnsemblFungi"/>
</dbReference>
<dbReference type="GO" id="GO:0016208">
    <property type="term" value="F:AMP binding"/>
    <property type="evidence" value="ECO:0007669"/>
    <property type="project" value="InterPro"/>
</dbReference>
<dbReference type="GO" id="GO:0005524">
    <property type="term" value="F:ATP binding"/>
    <property type="evidence" value="ECO:0007669"/>
    <property type="project" value="UniProtKB-KW"/>
</dbReference>
<dbReference type="GO" id="GO:0019427">
    <property type="term" value="P:acetyl-CoA biosynthetic process from acetate"/>
    <property type="evidence" value="ECO:0007669"/>
    <property type="project" value="InterPro"/>
</dbReference>
<dbReference type="CDD" id="cd05966">
    <property type="entry name" value="ACS"/>
    <property type="match status" value="1"/>
</dbReference>
<dbReference type="FunFam" id="3.30.300.30:FF:000004">
    <property type="entry name" value="Acetyl-coenzyme A synthetase"/>
    <property type="match status" value="1"/>
</dbReference>
<dbReference type="FunFam" id="3.40.50.12780:FF:000001">
    <property type="entry name" value="Acetyl-coenzyme A synthetase"/>
    <property type="match status" value="1"/>
</dbReference>
<dbReference type="Gene3D" id="3.30.300.30">
    <property type="match status" value="1"/>
</dbReference>
<dbReference type="Gene3D" id="3.40.50.12780">
    <property type="entry name" value="N-terminal domain of ligase-like"/>
    <property type="match status" value="1"/>
</dbReference>
<dbReference type="InterPro" id="IPR011904">
    <property type="entry name" value="Ac_CoA_lig"/>
</dbReference>
<dbReference type="InterPro" id="IPR032387">
    <property type="entry name" value="ACAS_N"/>
</dbReference>
<dbReference type="InterPro" id="IPR025110">
    <property type="entry name" value="AMP-bd_C"/>
</dbReference>
<dbReference type="InterPro" id="IPR045851">
    <property type="entry name" value="AMP-bd_C_sf"/>
</dbReference>
<dbReference type="InterPro" id="IPR020845">
    <property type="entry name" value="AMP-binding_CS"/>
</dbReference>
<dbReference type="InterPro" id="IPR000873">
    <property type="entry name" value="AMP-dep_synth/lig_dom"/>
</dbReference>
<dbReference type="InterPro" id="IPR042099">
    <property type="entry name" value="ANL_N_sf"/>
</dbReference>
<dbReference type="NCBIfam" id="TIGR02188">
    <property type="entry name" value="Ac_CoA_lig_AcsA"/>
    <property type="match status" value="1"/>
</dbReference>
<dbReference type="NCBIfam" id="NF001208">
    <property type="entry name" value="PRK00174.1"/>
    <property type="match status" value="1"/>
</dbReference>
<dbReference type="PANTHER" id="PTHR24095">
    <property type="entry name" value="ACETYL-COENZYME A SYNTHETASE"/>
    <property type="match status" value="1"/>
</dbReference>
<dbReference type="PANTHER" id="PTHR24095:SF245">
    <property type="entry name" value="ACETYL-COENZYME A SYNTHETASE 2"/>
    <property type="match status" value="1"/>
</dbReference>
<dbReference type="Pfam" id="PF16177">
    <property type="entry name" value="ACAS_N"/>
    <property type="match status" value="1"/>
</dbReference>
<dbReference type="Pfam" id="PF00501">
    <property type="entry name" value="AMP-binding"/>
    <property type="match status" value="1"/>
</dbReference>
<dbReference type="Pfam" id="PF13193">
    <property type="entry name" value="AMP-binding_C"/>
    <property type="match status" value="1"/>
</dbReference>
<dbReference type="SUPFAM" id="SSF56801">
    <property type="entry name" value="Acetyl-CoA synthetase-like"/>
    <property type="match status" value="1"/>
</dbReference>
<dbReference type="PROSITE" id="PS00455">
    <property type="entry name" value="AMP_BINDING"/>
    <property type="match status" value="1"/>
</dbReference>
<comment type="catalytic activity">
    <reaction>
        <text>acetate + ATP + CoA = acetyl-CoA + AMP + diphosphate</text>
        <dbReference type="Rhea" id="RHEA:23176"/>
        <dbReference type="ChEBI" id="CHEBI:30089"/>
        <dbReference type="ChEBI" id="CHEBI:30616"/>
        <dbReference type="ChEBI" id="CHEBI:33019"/>
        <dbReference type="ChEBI" id="CHEBI:57287"/>
        <dbReference type="ChEBI" id="CHEBI:57288"/>
        <dbReference type="ChEBI" id="CHEBI:456215"/>
        <dbReference type="EC" id="6.2.1.1"/>
    </reaction>
</comment>
<comment type="similarity">
    <text evidence="2">Belongs to the ATP-dependent AMP-binding enzyme family.</text>
</comment>
<feature type="chain" id="PRO_0000208408" description="Acetyl-coenzyme A synthetase 2">
    <location>
        <begin position="1"/>
        <end position="683"/>
    </location>
</feature>
<feature type="binding site" evidence="1">
    <location>
        <begin position="207"/>
        <end position="210"/>
    </location>
    <ligand>
        <name>CoA</name>
        <dbReference type="ChEBI" id="CHEBI:57287"/>
    </ligand>
</feature>
<feature type="binding site" evidence="1">
    <location>
        <position position="326"/>
    </location>
    <ligand>
        <name>CoA</name>
        <dbReference type="ChEBI" id="CHEBI:57287"/>
    </ligand>
</feature>
<feature type="binding site" evidence="1">
    <location>
        <begin position="402"/>
        <end position="404"/>
    </location>
    <ligand>
        <name>ATP</name>
        <dbReference type="ChEBI" id="CHEBI:30616"/>
    </ligand>
</feature>
<feature type="binding site" evidence="1">
    <location>
        <begin position="426"/>
        <end position="431"/>
    </location>
    <ligand>
        <name>ATP</name>
        <dbReference type="ChEBI" id="CHEBI:30616"/>
    </ligand>
</feature>
<feature type="binding site" evidence="1">
    <location>
        <position position="517"/>
    </location>
    <ligand>
        <name>ATP</name>
        <dbReference type="ChEBI" id="CHEBI:30616"/>
    </ligand>
</feature>
<feature type="binding site" evidence="1">
    <location>
        <position position="532"/>
    </location>
    <ligand>
        <name>ATP</name>
        <dbReference type="ChEBI" id="CHEBI:30616"/>
    </ligand>
</feature>
<feature type="binding site" evidence="1">
    <location>
        <position position="540"/>
    </location>
    <ligand>
        <name>CoA</name>
        <dbReference type="ChEBI" id="CHEBI:57287"/>
    </ligand>
</feature>
<feature type="binding site" evidence="1">
    <location>
        <position position="543"/>
    </location>
    <ligand>
        <name>ATP</name>
        <dbReference type="ChEBI" id="CHEBI:30616"/>
    </ligand>
</feature>
<feature type="binding site" evidence="1">
    <location>
        <position position="613"/>
    </location>
    <ligand>
        <name>CoA</name>
        <dbReference type="ChEBI" id="CHEBI:57287"/>
    </ligand>
</feature>
<organism>
    <name type="scientific">Candida glabrata (strain ATCC 2001 / BCRC 20586 / JCM 3761 / NBRC 0622 / NRRL Y-65 / CBS 138)</name>
    <name type="common">Yeast</name>
    <name type="synonym">Nakaseomyces glabratus</name>
    <dbReference type="NCBI Taxonomy" id="284593"/>
    <lineage>
        <taxon>Eukaryota</taxon>
        <taxon>Fungi</taxon>
        <taxon>Dikarya</taxon>
        <taxon>Ascomycota</taxon>
        <taxon>Saccharomycotina</taxon>
        <taxon>Saccharomycetes</taxon>
        <taxon>Saccharomycetales</taxon>
        <taxon>Saccharomycetaceae</taxon>
        <taxon>Nakaseomyces</taxon>
    </lineage>
</organism>
<sequence>MTLKEHKTVHEAQNAVARQAPEHFYKSQPSRGGFIKDISEYERLYKQSIEDPETFFSEKARELLHWDAPFSKVSYGSLEQGDVAWFLNGKLNASYNCVDRHAFANPDKPAIIYEADDEKDNYTITFGELLRRVSKVAGILKSWGVKKGDTVAIYLPMIPEAIIAMLAVVRLGAIHSVVFAGFSAGSLKDRVVDAGSKVVITCDEGRRGGKTVHLKKIVDEGLNGVDQVSRILVFKRTGTEGIPMKAGRDFWLHEEADKRRSYLPPVPCDAEDPLFLLYTSGSTGSPKGIVHTTGGYLLGAAMTTKYVFDVHPEDVFFTAGDVGWITGHTYALYGPLLLGVPTICFESTPAYPDYGRYWRIVERHKATHFYVAPTAMRLIKRVGEAEISKYDLSSLRVLGSVGEPISPELWEWYNEKIGNNNCVVCDTFWQTESGSHLIAPMAGAIPTKPGSTTLPFFGIDACIIDPVSGVEIEGNDVEGVLAVKSPWPSMARSVWNDHVRYVDTYMKPYPGYYFTGDGAGRDHDGYYWIRGRVDDVVNVSGHRLSTAEIEACLVNHENISETAVVGINDELTGQAVIAFVSLKEGYLQNDAPEGDAEHITPSNLRRELILQVRGEIGPFASPKCIILVRDLPKTRSGKIMRRVLRKIASNEADQLGDLSTLANADVVPAIISACENQFFAEKK</sequence>
<accession>Q6FXI2</accession>
<gene>
    <name type="primary">ACS2</name>
    <name type="ordered locus">CAGL0B02717g</name>
</gene>